<feature type="chain" id="PRO_1000133539" description="Small ribosomal subunit protein bS6">
    <location>
        <begin position="1"/>
        <end position="149"/>
    </location>
</feature>
<feature type="region of interest" description="Disordered" evidence="2">
    <location>
        <begin position="94"/>
        <end position="149"/>
    </location>
</feature>
<organism>
    <name type="scientific">Sinorhizobium fredii (strain NBRC 101917 / NGR234)</name>
    <dbReference type="NCBI Taxonomy" id="394"/>
    <lineage>
        <taxon>Bacteria</taxon>
        <taxon>Pseudomonadati</taxon>
        <taxon>Pseudomonadota</taxon>
        <taxon>Alphaproteobacteria</taxon>
        <taxon>Hyphomicrobiales</taxon>
        <taxon>Rhizobiaceae</taxon>
        <taxon>Sinorhizobium/Ensifer group</taxon>
        <taxon>Sinorhizobium</taxon>
    </lineage>
</organism>
<accession>C3M9B1</accession>
<keyword id="KW-1185">Reference proteome</keyword>
<keyword id="KW-0687">Ribonucleoprotein</keyword>
<keyword id="KW-0689">Ribosomal protein</keyword>
<keyword id="KW-0694">RNA-binding</keyword>
<keyword id="KW-0699">rRNA-binding</keyword>
<proteinExistence type="inferred from homology"/>
<evidence type="ECO:0000255" key="1">
    <source>
        <dbReference type="HAMAP-Rule" id="MF_00360"/>
    </source>
</evidence>
<evidence type="ECO:0000256" key="2">
    <source>
        <dbReference type="SAM" id="MobiDB-lite"/>
    </source>
</evidence>
<evidence type="ECO:0000305" key="3"/>
<sequence>MALYEHVFLARQDITPQQVDALVEQYKGVLEANGGKVGRVENWGLKSLTYRIKKNRKAHYVLMDIDAPAPAVHEVERQMRINEDILRYMTIAVEKHEEGPSAMMQKRDRDDRPRRDGDRPDRGGFGDRGPRPDRGDRDDRPRRPREDRA</sequence>
<name>RS6_SINFN</name>
<reference key="1">
    <citation type="journal article" date="2009" name="Appl. Environ. Microbiol.">
        <title>Rhizobium sp. strain NGR234 possesses a remarkable number of secretion systems.</title>
        <authorList>
            <person name="Schmeisser C."/>
            <person name="Liesegang H."/>
            <person name="Krysciak D."/>
            <person name="Bakkou N."/>
            <person name="Le Quere A."/>
            <person name="Wollherr A."/>
            <person name="Heinemeyer I."/>
            <person name="Morgenstern B."/>
            <person name="Pommerening-Roeser A."/>
            <person name="Flores M."/>
            <person name="Palacios R."/>
            <person name="Brenner S."/>
            <person name="Gottschalk G."/>
            <person name="Schmitz R.A."/>
            <person name="Broughton W.J."/>
            <person name="Perret X."/>
            <person name="Strittmatter A.W."/>
            <person name="Streit W.R."/>
        </authorList>
    </citation>
    <scope>NUCLEOTIDE SEQUENCE [LARGE SCALE GENOMIC DNA]</scope>
    <source>
        <strain>NBRC 101917 / NGR234</strain>
    </source>
</reference>
<gene>
    <name evidence="1" type="primary">rpsF</name>
    <name type="ordered locus">NGR_c08870</name>
</gene>
<protein>
    <recommendedName>
        <fullName evidence="1">Small ribosomal subunit protein bS6</fullName>
    </recommendedName>
    <alternativeName>
        <fullName evidence="3">30S ribosomal protein S6</fullName>
    </alternativeName>
</protein>
<dbReference type="EMBL" id="CP001389">
    <property type="protein sequence ID" value="ACP24677.1"/>
    <property type="molecule type" value="Genomic_DNA"/>
</dbReference>
<dbReference type="RefSeq" id="WP_012707462.1">
    <property type="nucleotide sequence ID" value="NC_012587.1"/>
</dbReference>
<dbReference type="RefSeq" id="YP_002825430.1">
    <property type="nucleotide sequence ID" value="NC_012587.1"/>
</dbReference>
<dbReference type="SMR" id="C3M9B1"/>
<dbReference type="STRING" id="394.NGR_c08870"/>
<dbReference type="GeneID" id="48972418"/>
<dbReference type="KEGG" id="rhi:NGR_c08870"/>
<dbReference type="PATRIC" id="fig|394.7.peg.3703"/>
<dbReference type="eggNOG" id="COG0360">
    <property type="taxonomic scope" value="Bacteria"/>
</dbReference>
<dbReference type="HOGENOM" id="CLU_113441_2_0_5"/>
<dbReference type="OrthoDB" id="9812702at2"/>
<dbReference type="Proteomes" id="UP000001054">
    <property type="component" value="Chromosome"/>
</dbReference>
<dbReference type="GO" id="GO:0022627">
    <property type="term" value="C:cytosolic small ribosomal subunit"/>
    <property type="evidence" value="ECO:0007669"/>
    <property type="project" value="TreeGrafter"/>
</dbReference>
<dbReference type="GO" id="GO:0070181">
    <property type="term" value="F:small ribosomal subunit rRNA binding"/>
    <property type="evidence" value="ECO:0007669"/>
    <property type="project" value="TreeGrafter"/>
</dbReference>
<dbReference type="GO" id="GO:0003735">
    <property type="term" value="F:structural constituent of ribosome"/>
    <property type="evidence" value="ECO:0007669"/>
    <property type="project" value="InterPro"/>
</dbReference>
<dbReference type="GO" id="GO:0006412">
    <property type="term" value="P:translation"/>
    <property type="evidence" value="ECO:0007669"/>
    <property type="project" value="UniProtKB-UniRule"/>
</dbReference>
<dbReference type="CDD" id="cd00473">
    <property type="entry name" value="bS6"/>
    <property type="match status" value="1"/>
</dbReference>
<dbReference type="Gene3D" id="3.30.70.60">
    <property type="match status" value="1"/>
</dbReference>
<dbReference type="HAMAP" id="MF_00360">
    <property type="entry name" value="Ribosomal_bS6"/>
    <property type="match status" value="1"/>
</dbReference>
<dbReference type="InterPro" id="IPR000529">
    <property type="entry name" value="Ribosomal_bS6"/>
</dbReference>
<dbReference type="InterPro" id="IPR035980">
    <property type="entry name" value="Ribosomal_bS6_sf"/>
</dbReference>
<dbReference type="InterPro" id="IPR020814">
    <property type="entry name" value="Ribosomal_S6_plastid/chlpt"/>
</dbReference>
<dbReference type="InterPro" id="IPR014717">
    <property type="entry name" value="Transl_elong_EF1B/ribsomal_bS6"/>
</dbReference>
<dbReference type="NCBIfam" id="TIGR00166">
    <property type="entry name" value="S6"/>
    <property type="match status" value="1"/>
</dbReference>
<dbReference type="PANTHER" id="PTHR21011">
    <property type="entry name" value="MITOCHONDRIAL 28S RIBOSOMAL PROTEIN S6"/>
    <property type="match status" value="1"/>
</dbReference>
<dbReference type="PANTHER" id="PTHR21011:SF1">
    <property type="entry name" value="SMALL RIBOSOMAL SUBUNIT PROTEIN BS6M"/>
    <property type="match status" value="1"/>
</dbReference>
<dbReference type="Pfam" id="PF01250">
    <property type="entry name" value="Ribosomal_S6"/>
    <property type="match status" value="1"/>
</dbReference>
<dbReference type="SUPFAM" id="SSF54995">
    <property type="entry name" value="Ribosomal protein S6"/>
    <property type="match status" value="1"/>
</dbReference>
<comment type="function">
    <text evidence="1">Binds together with bS18 to 16S ribosomal RNA.</text>
</comment>
<comment type="similarity">
    <text evidence="1">Belongs to the bacterial ribosomal protein bS6 family.</text>
</comment>